<gene>
    <name evidence="1" type="primary">mnmE</name>
    <name evidence="1" type="synonym">trmE</name>
    <name type="ordered locus">NMCC_0220</name>
</gene>
<sequence length="448" mass="47490">MSDNVPTIAAVATAPGRGGVGVIRISGKNLLPMAQALCGKTPKPRVATYADFTDADGQAIDSGLLLFFAAPASFTGEDVIELQGHGGPVVMDMLLNRCLELGARLAEPGEFTKRAFLNDKLDLAQAEGVADLIDASSRSAARLALRSLKGDFSRRIHGLVEDLITLRMLVEATLDFPEEDIDFLEAADARGKLDGLRRAVDDVLANAQQGAILREGLNVVLVGAPNVGKSSLLNALAGDEVAIVTDIAGTTRDAVRERILIDGVPVHIVDTAGLRETDDVVERIGIERSRKAVSEADVALVLVDPREGLNEKTRAILDALPSELKRIEIHSKSDLHAHAAGGFGTGAETVIALSAKTGDGLDALKRTLLREAGWQGEGEGLFLARTRHVNALKAAQEELSLAALCGNHQIELFAEHLRLAQVACGEITGEFTADDLLGVIFSRFCIGK</sequence>
<reference key="1">
    <citation type="journal article" date="2008" name="Genomics">
        <title>Characterization of ST-4821 complex, a unique Neisseria meningitidis clone.</title>
        <authorList>
            <person name="Peng J."/>
            <person name="Yang L."/>
            <person name="Yang F."/>
            <person name="Yang J."/>
            <person name="Yan Y."/>
            <person name="Nie H."/>
            <person name="Zhang X."/>
            <person name="Xiong Z."/>
            <person name="Jiang Y."/>
            <person name="Cheng F."/>
            <person name="Xu X."/>
            <person name="Chen S."/>
            <person name="Sun L."/>
            <person name="Li W."/>
            <person name="Shen Y."/>
            <person name="Shao Z."/>
            <person name="Liang X."/>
            <person name="Xu J."/>
            <person name="Jin Q."/>
        </authorList>
    </citation>
    <scope>NUCLEOTIDE SEQUENCE [LARGE SCALE GENOMIC DNA]</scope>
    <source>
        <strain>053442</strain>
    </source>
</reference>
<organism>
    <name type="scientific">Neisseria meningitidis serogroup C (strain 053442)</name>
    <dbReference type="NCBI Taxonomy" id="374833"/>
    <lineage>
        <taxon>Bacteria</taxon>
        <taxon>Pseudomonadati</taxon>
        <taxon>Pseudomonadota</taxon>
        <taxon>Betaproteobacteria</taxon>
        <taxon>Neisseriales</taxon>
        <taxon>Neisseriaceae</taxon>
        <taxon>Neisseria</taxon>
    </lineage>
</organism>
<protein>
    <recommendedName>
        <fullName evidence="1">tRNA modification GTPase MnmE</fullName>
        <ecNumber evidence="1">3.6.-.-</ecNumber>
    </recommendedName>
</protein>
<keyword id="KW-0963">Cytoplasm</keyword>
<keyword id="KW-0342">GTP-binding</keyword>
<keyword id="KW-0378">Hydrolase</keyword>
<keyword id="KW-0460">Magnesium</keyword>
<keyword id="KW-0479">Metal-binding</keyword>
<keyword id="KW-0547">Nucleotide-binding</keyword>
<keyword id="KW-0630">Potassium</keyword>
<keyword id="KW-0819">tRNA processing</keyword>
<evidence type="ECO:0000255" key="1">
    <source>
        <dbReference type="HAMAP-Rule" id="MF_00379"/>
    </source>
</evidence>
<comment type="function">
    <text evidence="1">Exhibits a very high intrinsic GTPase hydrolysis rate. Involved in the addition of a carboxymethylaminomethyl (cmnm) group at the wobble position (U34) of certain tRNAs, forming tRNA-cmnm(5)s(2)U34.</text>
</comment>
<comment type="cofactor">
    <cofactor evidence="1">
        <name>K(+)</name>
        <dbReference type="ChEBI" id="CHEBI:29103"/>
    </cofactor>
    <text evidence="1">Binds 1 potassium ion per subunit.</text>
</comment>
<comment type="subunit">
    <text evidence="1">Homodimer. Heterotetramer of two MnmE and two MnmG subunits.</text>
</comment>
<comment type="subcellular location">
    <subcellularLocation>
        <location evidence="1">Cytoplasm</location>
    </subcellularLocation>
</comment>
<comment type="similarity">
    <text evidence="1">Belongs to the TRAFAC class TrmE-Era-EngA-EngB-Septin-like GTPase superfamily. TrmE GTPase family.</text>
</comment>
<accession>A9M0N5</accession>
<name>MNME_NEIM0</name>
<proteinExistence type="inferred from homology"/>
<feature type="chain" id="PRO_0000345849" description="tRNA modification GTPase MnmE">
    <location>
        <begin position="1"/>
        <end position="448"/>
    </location>
</feature>
<feature type="domain" description="TrmE-type G">
    <location>
        <begin position="216"/>
        <end position="373"/>
    </location>
</feature>
<feature type="binding site" evidence="1">
    <location>
        <position position="24"/>
    </location>
    <ligand>
        <name>(6S)-5-formyl-5,6,7,8-tetrahydrofolate</name>
        <dbReference type="ChEBI" id="CHEBI:57457"/>
    </ligand>
</feature>
<feature type="binding site" evidence="1">
    <location>
        <position position="81"/>
    </location>
    <ligand>
        <name>(6S)-5-formyl-5,6,7,8-tetrahydrofolate</name>
        <dbReference type="ChEBI" id="CHEBI:57457"/>
    </ligand>
</feature>
<feature type="binding site" evidence="1">
    <location>
        <position position="120"/>
    </location>
    <ligand>
        <name>(6S)-5-formyl-5,6,7,8-tetrahydrofolate</name>
        <dbReference type="ChEBI" id="CHEBI:57457"/>
    </ligand>
</feature>
<feature type="binding site" evidence="1">
    <location>
        <begin position="226"/>
        <end position="231"/>
    </location>
    <ligand>
        <name>GTP</name>
        <dbReference type="ChEBI" id="CHEBI:37565"/>
    </ligand>
</feature>
<feature type="binding site" evidence="1">
    <location>
        <position position="226"/>
    </location>
    <ligand>
        <name>K(+)</name>
        <dbReference type="ChEBI" id="CHEBI:29103"/>
    </ligand>
</feature>
<feature type="binding site" evidence="1">
    <location>
        <position position="230"/>
    </location>
    <ligand>
        <name>Mg(2+)</name>
        <dbReference type="ChEBI" id="CHEBI:18420"/>
    </ligand>
</feature>
<feature type="binding site" evidence="1">
    <location>
        <begin position="245"/>
        <end position="251"/>
    </location>
    <ligand>
        <name>GTP</name>
        <dbReference type="ChEBI" id="CHEBI:37565"/>
    </ligand>
</feature>
<feature type="binding site" evidence="1">
    <location>
        <position position="245"/>
    </location>
    <ligand>
        <name>K(+)</name>
        <dbReference type="ChEBI" id="CHEBI:29103"/>
    </ligand>
</feature>
<feature type="binding site" evidence="1">
    <location>
        <position position="247"/>
    </location>
    <ligand>
        <name>K(+)</name>
        <dbReference type="ChEBI" id="CHEBI:29103"/>
    </ligand>
</feature>
<feature type="binding site" evidence="1">
    <location>
        <position position="250"/>
    </location>
    <ligand>
        <name>K(+)</name>
        <dbReference type="ChEBI" id="CHEBI:29103"/>
    </ligand>
</feature>
<feature type="binding site" evidence="1">
    <location>
        <position position="251"/>
    </location>
    <ligand>
        <name>Mg(2+)</name>
        <dbReference type="ChEBI" id="CHEBI:18420"/>
    </ligand>
</feature>
<feature type="binding site" evidence="1">
    <location>
        <begin position="270"/>
        <end position="273"/>
    </location>
    <ligand>
        <name>GTP</name>
        <dbReference type="ChEBI" id="CHEBI:37565"/>
    </ligand>
</feature>
<feature type="binding site" evidence="1">
    <location>
        <position position="448"/>
    </location>
    <ligand>
        <name>(6S)-5-formyl-5,6,7,8-tetrahydrofolate</name>
        <dbReference type="ChEBI" id="CHEBI:57457"/>
    </ligand>
</feature>
<dbReference type="EC" id="3.6.-.-" evidence="1"/>
<dbReference type="EMBL" id="CP000381">
    <property type="protein sequence ID" value="ABX72429.1"/>
    <property type="molecule type" value="Genomic_DNA"/>
</dbReference>
<dbReference type="RefSeq" id="WP_002219905.1">
    <property type="nucleotide sequence ID" value="NC_010120.1"/>
</dbReference>
<dbReference type="SMR" id="A9M0N5"/>
<dbReference type="KEGG" id="nmn:NMCC_0220"/>
<dbReference type="HOGENOM" id="CLU_019624_4_1_4"/>
<dbReference type="Proteomes" id="UP000001177">
    <property type="component" value="Chromosome"/>
</dbReference>
<dbReference type="GO" id="GO:0005829">
    <property type="term" value="C:cytosol"/>
    <property type="evidence" value="ECO:0007669"/>
    <property type="project" value="TreeGrafter"/>
</dbReference>
<dbReference type="GO" id="GO:0005525">
    <property type="term" value="F:GTP binding"/>
    <property type="evidence" value="ECO:0007669"/>
    <property type="project" value="UniProtKB-UniRule"/>
</dbReference>
<dbReference type="GO" id="GO:0003924">
    <property type="term" value="F:GTPase activity"/>
    <property type="evidence" value="ECO:0007669"/>
    <property type="project" value="UniProtKB-UniRule"/>
</dbReference>
<dbReference type="GO" id="GO:0046872">
    <property type="term" value="F:metal ion binding"/>
    <property type="evidence" value="ECO:0007669"/>
    <property type="project" value="UniProtKB-KW"/>
</dbReference>
<dbReference type="GO" id="GO:0030488">
    <property type="term" value="P:tRNA methylation"/>
    <property type="evidence" value="ECO:0007669"/>
    <property type="project" value="TreeGrafter"/>
</dbReference>
<dbReference type="GO" id="GO:0002098">
    <property type="term" value="P:tRNA wobble uridine modification"/>
    <property type="evidence" value="ECO:0007669"/>
    <property type="project" value="TreeGrafter"/>
</dbReference>
<dbReference type="CDD" id="cd04164">
    <property type="entry name" value="trmE"/>
    <property type="match status" value="1"/>
</dbReference>
<dbReference type="CDD" id="cd14858">
    <property type="entry name" value="TrmE_N"/>
    <property type="match status" value="1"/>
</dbReference>
<dbReference type="FunFam" id="3.30.1360.120:FF:000001">
    <property type="entry name" value="tRNA modification GTPase MnmE"/>
    <property type="match status" value="1"/>
</dbReference>
<dbReference type="FunFam" id="3.40.50.300:FF:001376">
    <property type="entry name" value="tRNA modification GTPase MnmE"/>
    <property type="match status" value="1"/>
</dbReference>
<dbReference type="Gene3D" id="3.40.50.300">
    <property type="entry name" value="P-loop containing nucleotide triphosphate hydrolases"/>
    <property type="match status" value="1"/>
</dbReference>
<dbReference type="Gene3D" id="3.30.1360.120">
    <property type="entry name" value="Probable tRNA modification gtpase trme, domain 1"/>
    <property type="match status" value="1"/>
</dbReference>
<dbReference type="Gene3D" id="1.20.120.430">
    <property type="entry name" value="tRNA modification GTPase MnmE domain 2"/>
    <property type="match status" value="1"/>
</dbReference>
<dbReference type="HAMAP" id="MF_00379">
    <property type="entry name" value="GTPase_MnmE"/>
    <property type="match status" value="1"/>
</dbReference>
<dbReference type="InterPro" id="IPR031168">
    <property type="entry name" value="G_TrmE"/>
</dbReference>
<dbReference type="InterPro" id="IPR006073">
    <property type="entry name" value="GTP-bd"/>
</dbReference>
<dbReference type="InterPro" id="IPR018948">
    <property type="entry name" value="GTP-bd_TrmE_N"/>
</dbReference>
<dbReference type="InterPro" id="IPR004520">
    <property type="entry name" value="GTPase_MnmE"/>
</dbReference>
<dbReference type="InterPro" id="IPR027368">
    <property type="entry name" value="MnmE_dom2"/>
</dbReference>
<dbReference type="InterPro" id="IPR025867">
    <property type="entry name" value="MnmE_helical"/>
</dbReference>
<dbReference type="InterPro" id="IPR027417">
    <property type="entry name" value="P-loop_NTPase"/>
</dbReference>
<dbReference type="InterPro" id="IPR005225">
    <property type="entry name" value="Small_GTP-bd"/>
</dbReference>
<dbReference type="InterPro" id="IPR027266">
    <property type="entry name" value="TrmE/GcvT_dom1"/>
</dbReference>
<dbReference type="NCBIfam" id="TIGR00450">
    <property type="entry name" value="mnmE_trmE_thdF"/>
    <property type="match status" value="1"/>
</dbReference>
<dbReference type="NCBIfam" id="NF003661">
    <property type="entry name" value="PRK05291.1-3"/>
    <property type="match status" value="1"/>
</dbReference>
<dbReference type="NCBIfam" id="TIGR00231">
    <property type="entry name" value="small_GTP"/>
    <property type="match status" value="1"/>
</dbReference>
<dbReference type="PANTHER" id="PTHR42714">
    <property type="entry name" value="TRNA MODIFICATION GTPASE GTPBP3"/>
    <property type="match status" value="1"/>
</dbReference>
<dbReference type="PANTHER" id="PTHR42714:SF2">
    <property type="entry name" value="TRNA MODIFICATION GTPASE GTPBP3, MITOCHONDRIAL"/>
    <property type="match status" value="1"/>
</dbReference>
<dbReference type="Pfam" id="PF01926">
    <property type="entry name" value="MMR_HSR1"/>
    <property type="match status" value="1"/>
</dbReference>
<dbReference type="Pfam" id="PF12631">
    <property type="entry name" value="MnmE_helical"/>
    <property type="match status" value="1"/>
</dbReference>
<dbReference type="Pfam" id="PF10396">
    <property type="entry name" value="TrmE_N"/>
    <property type="match status" value="1"/>
</dbReference>
<dbReference type="SUPFAM" id="SSF52540">
    <property type="entry name" value="P-loop containing nucleoside triphosphate hydrolases"/>
    <property type="match status" value="1"/>
</dbReference>
<dbReference type="SUPFAM" id="SSF116878">
    <property type="entry name" value="TrmE connector domain"/>
    <property type="match status" value="1"/>
</dbReference>
<dbReference type="PROSITE" id="PS51709">
    <property type="entry name" value="G_TRME"/>
    <property type="match status" value="1"/>
</dbReference>